<reference key="1">
    <citation type="journal article" date="2008" name="Chem. Biol. Interact.">
        <title>Extending the Bacillus cereus group genomics to putative food-borne pathogens of different toxicity.</title>
        <authorList>
            <person name="Lapidus A."/>
            <person name="Goltsman E."/>
            <person name="Auger S."/>
            <person name="Galleron N."/>
            <person name="Segurens B."/>
            <person name="Dossat C."/>
            <person name="Land M.L."/>
            <person name="Broussolle V."/>
            <person name="Brillard J."/>
            <person name="Guinebretiere M.-H."/>
            <person name="Sanchis V."/>
            <person name="Nguen-the C."/>
            <person name="Lereclus D."/>
            <person name="Richardson P."/>
            <person name="Wincker P."/>
            <person name="Weissenbach J."/>
            <person name="Ehrlich S.D."/>
            <person name="Sorokin A."/>
        </authorList>
    </citation>
    <scope>NUCLEOTIDE SEQUENCE [LARGE SCALE GENOMIC DNA]</scope>
    <source>
        <strain>DSM 22905 / CIP 110041 / 391-98 / NVH 391-98</strain>
    </source>
</reference>
<comment type="function">
    <text evidence="1">Specifically catalyzes the cleavage of the D-lactyl ether substituent of MurNAc 6-phosphate, producing GlcNAc 6-phosphate and D-lactate.</text>
</comment>
<comment type="catalytic activity">
    <reaction evidence="1">
        <text>N-acetyl-D-muramate 6-phosphate + H2O = N-acetyl-D-glucosamine 6-phosphate + (R)-lactate</text>
        <dbReference type="Rhea" id="RHEA:26410"/>
        <dbReference type="ChEBI" id="CHEBI:15377"/>
        <dbReference type="ChEBI" id="CHEBI:16004"/>
        <dbReference type="ChEBI" id="CHEBI:57513"/>
        <dbReference type="ChEBI" id="CHEBI:58722"/>
        <dbReference type="EC" id="4.2.1.126"/>
    </reaction>
</comment>
<comment type="pathway">
    <text evidence="1">Amino-sugar metabolism; N-acetylmuramate degradation.</text>
</comment>
<comment type="subunit">
    <text evidence="1">Homodimer.</text>
</comment>
<comment type="miscellaneous">
    <text evidence="1">A lyase-type mechanism (elimination/hydration) is suggested for the cleavage of the lactyl ether bond of MurNAc 6-phosphate, with the formation of an alpha,beta-unsaturated aldehyde intermediate with (E)-stereochemistry, followed by the syn addition of water to give product.</text>
</comment>
<comment type="similarity">
    <text evidence="1">Belongs to the GCKR-like family. MurNAc-6-P etherase subfamily.</text>
</comment>
<protein>
    <recommendedName>
        <fullName evidence="1">N-acetylmuramic acid 6-phosphate etherase</fullName>
        <shortName evidence="1">MurNAc-6-P etherase</shortName>
        <ecNumber evidence="1">4.2.1.126</ecNumber>
    </recommendedName>
    <alternativeName>
        <fullName evidence="1">N-acetylmuramic acid 6-phosphate hydrolase</fullName>
    </alternativeName>
    <alternativeName>
        <fullName evidence="1">N-acetylmuramic acid 6-phosphate lyase</fullName>
    </alternativeName>
</protein>
<keyword id="KW-0119">Carbohydrate metabolism</keyword>
<keyword id="KW-0456">Lyase</keyword>
<dbReference type="EC" id="4.2.1.126" evidence="1"/>
<dbReference type="EMBL" id="CP000764">
    <property type="protein sequence ID" value="ABS21017.1"/>
    <property type="molecule type" value="Genomic_DNA"/>
</dbReference>
<dbReference type="RefSeq" id="WP_011983773.1">
    <property type="nucleotide sequence ID" value="NC_009674.1"/>
</dbReference>
<dbReference type="SMR" id="A7GLK9"/>
<dbReference type="STRING" id="315749.Bcer98_0670"/>
<dbReference type="GeneID" id="33896049"/>
<dbReference type="KEGG" id="bcy:Bcer98_0670"/>
<dbReference type="eggNOG" id="COG2103">
    <property type="taxonomic scope" value="Bacteria"/>
</dbReference>
<dbReference type="HOGENOM" id="CLU_049049_1_1_9"/>
<dbReference type="OrthoDB" id="9813395at2"/>
<dbReference type="UniPathway" id="UPA00342"/>
<dbReference type="Proteomes" id="UP000002300">
    <property type="component" value="Chromosome"/>
</dbReference>
<dbReference type="GO" id="GO:0097367">
    <property type="term" value="F:carbohydrate derivative binding"/>
    <property type="evidence" value="ECO:0007669"/>
    <property type="project" value="InterPro"/>
</dbReference>
<dbReference type="GO" id="GO:0016835">
    <property type="term" value="F:carbon-oxygen lyase activity"/>
    <property type="evidence" value="ECO:0007669"/>
    <property type="project" value="UniProtKB-UniRule"/>
</dbReference>
<dbReference type="GO" id="GO:0016803">
    <property type="term" value="F:ether hydrolase activity"/>
    <property type="evidence" value="ECO:0007669"/>
    <property type="project" value="TreeGrafter"/>
</dbReference>
<dbReference type="GO" id="GO:0046348">
    <property type="term" value="P:amino sugar catabolic process"/>
    <property type="evidence" value="ECO:0007669"/>
    <property type="project" value="InterPro"/>
</dbReference>
<dbReference type="GO" id="GO:0097173">
    <property type="term" value="P:N-acetylmuramic acid catabolic process"/>
    <property type="evidence" value="ECO:0007669"/>
    <property type="project" value="UniProtKB-UniPathway"/>
</dbReference>
<dbReference type="GO" id="GO:0009254">
    <property type="term" value="P:peptidoglycan turnover"/>
    <property type="evidence" value="ECO:0007669"/>
    <property type="project" value="TreeGrafter"/>
</dbReference>
<dbReference type="CDD" id="cd05007">
    <property type="entry name" value="SIS_Etherase"/>
    <property type="match status" value="1"/>
</dbReference>
<dbReference type="FunFam" id="1.10.8.1080:FF:000001">
    <property type="entry name" value="N-acetylmuramic acid 6-phosphate etherase"/>
    <property type="match status" value="1"/>
</dbReference>
<dbReference type="FunFam" id="3.40.50.10490:FF:000014">
    <property type="entry name" value="N-acetylmuramic acid 6-phosphate etherase"/>
    <property type="match status" value="1"/>
</dbReference>
<dbReference type="Gene3D" id="1.10.8.1080">
    <property type="match status" value="1"/>
</dbReference>
<dbReference type="Gene3D" id="3.40.50.10490">
    <property type="entry name" value="Glucose-6-phosphate isomerase like protein, domain 1"/>
    <property type="match status" value="1"/>
</dbReference>
<dbReference type="HAMAP" id="MF_00068">
    <property type="entry name" value="MurQ"/>
    <property type="match status" value="1"/>
</dbReference>
<dbReference type="InterPro" id="IPR005488">
    <property type="entry name" value="Etherase_MurQ"/>
</dbReference>
<dbReference type="InterPro" id="IPR005486">
    <property type="entry name" value="Glucokinase_regulatory_CS"/>
</dbReference>
<dbReference type="InterPro" id="IPR040190">
    <property type="entry name" value="MURQ/GCKR"/>
</dbReference>
<dbReference type="InterPro" id="IPR001347">
    <property type="entry name" value="SIS_dom"/>
</dbReference>
<dbReference type="InterPro" id="IPR046348">
    <property type="entry name" value="SIS_dom_sf"/>
</dbReference>
<dbReference type="NCBIfam" id="TIGR00274">
    <property type="entry name" value="N-acetylmuramic acid 6-phosphate etherase"/>
    <property type="match status" value="1"/>
</dbReference>
<dbReference type="NCBIfam" id="NF003915">
    <property type="entry name" value="PRK05441.1"/>
    <property type="match status" value="1"/>
</dbReference>
<dbReference type="NCBIfam" id="NF009222">
    <property type="entry name" value="PRK12570.1"/>
    <property type="match status" value="1"/>
</dbReference>
<dbReference type="PANTHER" id="PTHR10088">
    <property type="entry name" value="GLUCOKINASE REGULATORY PROTEIN"/>
    <property type="match status" value="1"/>
</dbReference>
<dbReference type="PANTHER" id="PTHR10088:SF4">
    <property type="entry name" value="GLUCOKINASE REGULATORY PROTEIN"/>
    <property type="match status" value="1"/>
</dbReference>
<dbReference type="Pfam" id="PF22645">
    <property type="entry name" value="GKRP_SIS_N"/>
    <property type="match status" value="1"/>
</dbReference>
<dbReference type="SUPFAM" id="SSF53697">
    <property type="entry name" value="SIS domain"/>
    <property type="match status" value="1"/>
</dbReference>
<dbReference type="PROSITE" id="PS01272">
    <property type="entry name" value="GCKR"/>
    <property type="match status" value="1"/>
</dbReference>
<dbReference type="PROSITE" id="PS51464">
    <property type="entry name" value="SIS"/>
    <property type="match status" value="1"/>
</dbReference>
<accession>A7GLK9</accession>
<proteinExistence type="inferred from homology"/>
<feature type="chain" id="PRO_1000075104" description="N-acetylmuramic acid 6-phosphate etherase">
    <location>
        <begin position="1"/>
        <end position="294"/>
    </location>
</feature>
<feature type="domain" description="SIS" evidence="1">
    <location>
        <begin position="54"/>
        <end position="217"/>
    </location>
</feature>
<feature type="active site" description="Proton donor" evidence="1">
    <location>
        <position position="82"/>
    </location>
</feature>
<feature type="active site" evidence="1">
    <location>
        <position position="113"/>
    </location>
</feature>
<sequence>MLERLSTEYRNKNTMNLDEMSIKEVLEAMNQEDRKVAIAVHKEMEQIEKIVRNVISSFQNGGRLIYIGAGTSGRLGILDAVECPPTFGTDERQVQGFIAGGMKAFTKAVEGAEDCEELAIEDLKGIQLNDKDTVIGIAASGRTPYVIGGLKYANYVGAKTASISCNKGAEMSQLAQVSVEVETGAEVLTGSTRLKAGTAQKLVLNMISTASMIGIGKVYKNLMVDVQSTNQKLVERSKRIIMEATEVDYKEAEAYYEKANRNVKAAIVMILLQCEYGEALEKLKDAKGFVKKAL</sequence>
<evidence type="ECO:0000255" key="1">
    <source>
        <dbReference type="HAMAP-Rule" id="MF_00068"/>
    </source>
</evidence>
<name>MURQ_BACCN</name>
<gene>
    <name evidence="1" type="primary">murQ</name>
    <name type="ordered locus">Bcer98_0670</name>
</gene>
<organism>
    <name type="scientific">Bacillus cytotoxicus (strain DSM 22905 / CIP 110041 / 391-98 / NVH 391-98)</name>
    <dbReference type="NCBI Taxonomy" id="315749"/>
    <lineage>
        <taxon>Bacteria</taxon>
        <taxon>Bacillati</taxon>
        <taxon>Bacillota</taxon>
        <taxon>Bacilli</taxon>
        <taxon>Bacillales</taxon>
        <taxon>Bacillaceae</taxon>
        <taxon>Bacillus</taxon>
        <taxon>Bacillus cereus group</taxon>
    </lineage>
</organism>